<sequence>MMTNFPWLTTIILFPIVASLLLPIIPDKDGKTVRWYSLIVGLIDFAIIIAAFCTGYDVNNPELQLVESYPWVPQLDLNWSVGADGLSMPLIILTGFITTLAIMAAWPVSFKPKLFYFLMLAMYGGQIAVFAVQDMLLFFLVWELELVPVYLILSIWGGKRRLYAATKFILYTAGGSLFILIAALTMAFYGDTVSFDMRTIALKDYAFNLQLLLYAAFLIAYAVKLPIFPLHTWLPDAHGEATAPAHMLLAGILLKMGGYALLRMNAGMLPDAHAVFAPVLVILGVVNIVYAALTSFAQRNLKRKIAYSSISHMGFVLIGMASFTDIGLSGAVLQMISHGLIGASLFFLVGATYDRTHTLILDEMGGVGQKMKKVFAMWTTCSMASLALPGMSGFVAEVMVFIGFATSDAYSSTFKVLVIFLSAVGVILTPIYLLSMLREILYGPENKKLVEHEVLKDAEPREVFIIGCLLVPIIGIGLYPKIVTQIYDATTVQLTARLRDSVPVLMGPEKVALTDVSELPTRAPEIK</sequence>
<proteinExistence type="inferred from homology"/>
<reference key="1">
    <citation type="journal article" date="2015" name="Proc. Natl. Acad. Sci. U.S.A.">
        <title>Trichodesmium genome maintains abundant, widespread noncoding DNA in situ, despite oligotrophic lifestyle.</title>
        <authorList>
            <person name="Walworth N."/>
            <person name="Pfreundt U."/>
            <person name="Nelson W.C."/>
            <person name="Mincer T."/>
            <person name="Heidelberg J.F."/>
            <person name="Fu F."/>
            <person name="Waterbury J.B."/>
            <person name="Glavina del Rio T."/>
            <person name="Goodwin L."/>
            <person name="Kyrpides N.C."/>
            <person name="Land M.L."/>
            <person name="Woyke T."/>
            <person name="Hutchins D.A."/>
            <person name="Hess W.R."/>
            <person name="Webb E.A."/>
        </authorList>
    </citation>
    <scope>NUCLEOTIDE SEQUENCE [LARGE SCALE GENOMIC DNA]</scope>
    <source>
        <strain>IMS101</strain>
    </source>
</reference>
<keyword id="KW-0472">Membrane</keyword>
<keyword id="KW-0520">NAD</keyword>
<keyword id="KW-0521">NADP</keyword>
<keyword id="KW-0618">Plastoquinone</keyword>
<keyword id="KW-0874">Quinone</keyword>
<keyword id="KW-0793">Thylakoid</keyword>
<keyword id="KW-1278">Translocase</keyword>
<keyword id="KW-0812">Transmembrane</keyword>
<keyword id="KW-1133">Transmembrane helix</keyword>
<organism>
    <name type="scientific">Trichodesmium erythraeum (strain IMS101)</name>
    <dbReference type="NCBI Taxonomy" id="203124"/>
    <lineage>
        <taxon>Bacteria</taxon>
        <taxon>Bacillati</taxon>
        <taxon>Cyanobacteriota</taxon>
        <taxon>Cyanophyceae</taxon>
        <taxon>Oscillatoriophycideae</taxon>
        <taxon>Oscillatoriales</taxon>
        <taxon>Microcoleaceae</taxon>
        <taxon>Trichodesmium</taxon>
    </lineage>
</organism>
<feature type="chain" id="PRO_0000343264" description="NAD(P)H-quinone oxidoreductase chain 4 1">
    <location>
        <begin position="1"/>
        <end position="527"/>
    </location>
</feature>
<feature type="transmembrane region" description="Helical" evidence="1">
    <location>
        <begin position="5"/>
        <end position="25"/>
    </location>
</feature>
<feature type="transmembrane region" description="Helical" evidence="1">
    <location>
        <begin position="35"/>
        <end position="55"/>
    </location>
</feature>
<feature type="transmembrane region" description="Helical" evidence="1">
    <location>
        <begin position="90"/>
        <end position="110"/>
    </location>
</feature>
<feature type="transmembrane region" description="Helical" evidence="1">
    <location>
        <begin position="112"/>
        <end position="132"/>
    </location>
</feature>
<feature type="transmembrane region" description="Helical" evidence="1">
    <location>
        <begin position="136"/>
        <end position="156"/>
    </location>
</feature>
<feature type="transmembrane region" description="Helical" evidence="1">
    <location>
        <begin position="168"/>
        <end position="188"/>
    </location>
</feature>
<feature type="transmembrane region" description="Helical" evidence="1">
    <location>
        <begin position="211"/>
        <end position="231"/>
    </location>
</feature>
<feature type="transmembrane region" description="Helical" evidence="1">
    <location>
        <begin position="242"/>
        <end position="262"/>
    </location>
</feature>
<feature type="transmembrane region" description="Helical" evidence="1">
    <location>
        <begin position="274"/>
        <end position="294"/>
    </location>
</feature>
<feature type="transmembrane region" description="Helical" evidence="1">
    <location>
        <begin position="310"/>
        <end position="330"/>
    </location>
</feature>
<feature type="transmembrane region" description="Helical" evidence="1">
    <location>
        <begin position="331"/>
        <end position="351"/>
    </location>
</feature>
<feature type="transmembrane region" description="Helical" evidence="1">
    <location>
        <begin position="386"/>
        <end position="406"/>
    </location>
</feature>
<feature type="transmembrane region" description="Helical" evidence="1">
    <location>
        <begin position="416"/>
        <end position="436"/>
    </location>
</feature>
<feature type="transmembrane region" description="Helical" evidence="1">
    <location>
        <begin position="463"/>
        <end position="483"/>
    </location>
</feature>
<comment type="function">
    <text evidence="1">NDH-1 shuttles electrons from NAD(P)H, via FMN and iron-sulfur (Fe-S) centers, to quinones in the respiratory chain. The immediate electron acceptor for the enzyme in this species is believed to be plastoquinone. Couples the redox reaction to proton translocation (for every two electrons transferred, four hydrogen ions are translocated across the cytoplasmic membrane), and thus conserves the redox energy in a proton gradient.</text>
</comment>
<comment type="catalytic activity">
    <reaction evidence="1">
        <text>a plastoquinone + NADH + (n+1) H(+)(in) = a plastoquinol + NAD(+) + n H(+)(out)</text>
        <dbReference type="Rhea" id="RHEA:42608"/>
        <dbReference type="Rhea" id="RHEA-COMP:9561"/>
        <dbReference type="Rhea" id="RHEA-COMP:9562"/>
        <dbReference type="ChEBI" id="CHEBI:15378"/>
        <dbReference type="ChEBI" id="CHEBI:17757"/>
        <dbReference type="ChEBI" id="CHEBI:57540"/>
        <dbReference type="ChEBI" id="CHEBI:57945"/>
        <dbReference type="ChEBI" id="CHEBI:62192"/>
    </reaction>
</comment>
<comment type="catalytic activity">
    <reaction evidence="1">
        <text>a plastoquinone + NADPH + (n+1) H(+)(in) = a plastoquinol + NADP(+) + n H(+)(out)</text>
        <dbReference type="Rhea" id="RHEA:42612"/>
        <dbReference type="Rhea" id="RHEA-COMP:9561"/>
        <dbReference type="Rhea" id="RHEA-COMP:9562"/>
        <dbReference type="ChEBI" id="CHEBI:15378"/>
        <dbReference type="ChEBI" id="CHEBI:17757"/>
        <dbReference type="ChEBI" id="CHEBI:57783"/>
        <dbReference type="ChEBI" id="CHEBI:58349"/>
        <dbReference type="ChEBI" id="CHEBI:62192"/>
    </reaction>
</comment>
<comment type="subcellular location">
    <subcellularLocation>
        <location evidence="1">Cellular thylakoid membrane</location>
        <topology evidence="1">Multi-pass membrane protein</topology>
    </subcellularLocation>
</comment>
<comment type="similarity">
    <text evidence="1">Belongs to the complex I subunit 4 family.</text>
</comment>
<protein>
    <recommendedName>
        <fullName evidence="1">NAD(P)H-quinone oxidoreductase chain 4 1</fullName>
        <ecNumber evidence="1">7.1.1.-</ecNumber>
    </recommendedName>
    <alternativeName>
        <fullName evidence="1">NAD(P)H dehydrogenase I, chain 4 1</fullName>
    </alternativeName>
    <alternativeName>
        <fullName evidence="1">NDH-1, chain 4 1</fullName>
    </alternativeName>
</protein>
<gene>
    <name evidence="1" type="primary">ndhD1</name>
    <name type="ordered locus">Tery_0659</name>
</gene>
<evidence type="ECO:0000255" key="1">
    <source>
        <dbReference type="HAMAP-Rule" id="MF_00491"/>
    </source>
</evidence>
<accession>Q118H6</accession>
<dbReference type="EC" id="7.1.1.-" evidence="1"/>
<dbReference type="EMBL" id="CP000393">
    <property type="protein sequence ID" value="ABG50098.1"/>
    <property type="molecule type" value="Genomic_DNA"/>
</dbReference>
<dbReference type="SMR" id="Q118H6"/>
<dbReference type="STRING" id="203124.Tery_0659"/>
<dbReference type="KEGG" id="ter:Tery_0659"/>
<dbReference type="eggNOG" id="COG1008">
    <property type="taxonomic scope" value="Bacteria"/>
</dbReference>
<dbReference type="HOGENOM" id="CLU_007100_4_0_3"/>
<dbReference type="OrthoDB" id="9811718at2"/>
<dbReference type="GO" id="GO:0031676">
    <property type="term" value="C:plasma membrane-derived thylakoid membrane"/>
    <property type="evidence" value="ECO:0007669"/>
    <property type="project" value="UniProtKB-SubCell"/>
</dbReference>
<dbReference type="GO" id="GO:0008137">
    <property type="term" value="F:NADH dehydrogenase (ubiquinone) activity"/>
    <property type="evidence" value="ECO:0007669"/>
    <property type="project" value="InterPro"/>
</dbReference>
<dbReference type="GO" id="GO:0048039">
    <property type="term" value="F:ubiquinone binding"/>
    <property type="evidence" value="ECO:0007669"/>
    <property type="project" value="TreeGrafter"/>
</dbReference>
<dbReference type="GO" id="GO:0042773">
    <property type="term" value="P:ATP synthesis coupled electron transport"/>
    <property type="evidence" value="ECO:0007669"/>
    <property type="project" value="InterPro"/>
</dbReference>
<dbReference type="GO" id="GO:0015990">
    <property type="term" value="P:electron transport coupled proton transport"/>
    <property type="evidence" value="ECO:0007669"/>
    <property type="project" value="TreeGrafter"/>
</dbReference>
<dbReference type="HAMAP" id="MF_00491">
    <property type="entry name" value="NDH1_NuoM"/>
    <property type="match status" value="1"/>
</dbReference>
<dbReference type="InterPro" id="IPR022997">
    <property type="entry name" value="NADH_Q_OxRdtase_chain4"/>
</dbReference>
<dbReference type="InterPro" id="IPR010227">
    <property type="entry name" value="NADH_Q_OxRdtase_chainM/4"/>
</dbReference>
<dbReference type="InterPro" id="IPR003918">
    <property type="entry name" value="NADH_UbQ_OxRdtase"/>
</dbReference>
<dbReference type="InterPro" id="IPR001750">
    <property type="entry name" value="ND/Mrp_TM"/>
</dbReference>
<dbReference type="NCBIfam" id="TIGR01972">
    <property type="entry name" value="NDH_I_M"/>
    <property type="match status" value="1"/>
</dbReference>
<dbReference type="NCBIfam" id="NF002713">
    <property type="entry name" value="PRK02546.1"/>
    <property type="match status" value="1"/>
</dbReference>
<dbReference type="NCBIfam" id="NF009212">
    <property type="entry name" value="PRK12561.1"/>
    <property type="match status" value="1"/>
</dbReference>
<dbReference type="PANTHER" id="PTHR43507:SF21">
    <property type="entry name" value="NAD(P)H-QUINONE OXIDOREDUCTASE CHAIN 4, CHLOROPLASTIC"/>
    <property type="match status" value="1"/>
</dbReference>
<dbReference type="PANTHER" id="PTHR43507">
    <property type="entry name" value="NADH-UBIQUINONE OXIDOREDUCTASE CHAIN 4"/>
    <property type="match status" value="1"/>
</dbReference>
<dbReference type="Pfam" id="PF00361">
    <property type="entry name" value="Proton_antipo_M"/>
    <property type="match status" value="1"/>
</dbReference>
<dbReference type="PRINTS" id="PR01437">
    <property type="entry name" value="NUOXDRDTASE4"/>
</dbReference>
<name>NU4C1_TRIEI</name>